<sequence length="148" mass="16804">MASFFRTAVRGPSAGLFRAVARPQPIAARVSLFSTSSRFRSEHHEETFEEFTARYEKEFDAVQDVFELQRNLNNAFAYDLVPSPSVLAAALKAARRVNDFPTAVRVFEGIKAKVENKGQYEQYLAELKPLREELGITLKEDLYPEEAN</sequence>
<protein>
    <recommendedName>
        <fullName>Cytochrome c oxidase subunit 6, mitochondrial</fullName>
    </recommendedName>
    <alternativeName>
        <fullName>Cytochrome c oxidase polypeptide VI</fullName>
    </alternativeName>
    <alternativeName>
        <fullName evidence="5">Cytochrome c oxidase subunit Cox6</fullName>
    </alternativeName>
</protein>
<name>COX6_NEUCR</name>
<evidence type="ECO:0000250" key="1">
    <source>
        <dbReference type="UniProtKB" id="P00427"/>
    </source>
</evidence>
<evidence type="ECO:0000255" key="2"/>
<evidence type="ECO:0000269" key="3">
    <source>
    </source>
</evidence>
<evidence type="ECO:0000269" key="4">
    <source>
    </source>
</evidence>
<evidence type="ECO:0000303" key="5">
    <source>
    </source>
</evidence>
<evidence type="ECO:0000305" key="6"/>
<feature type="transit peptide" description="Mitochondrion" evidence="2">
    <location>
        <begin position="1"/>
        <end position="40"/>
    </location>
</feature>
<feature type="chain" id="PRO_0000006106" description="Cytochrome c oxidase subunit 6, mitochondrial">
    <location>
        <begin position="41"/>
        <end position="148"/>
    </location>
</feature>
<feature type="sequence conflict" description="In Ref. 3; AAA33576." evidence="6" ref="3">
    <original>L</original>
    <variation>V</variation>
    <location>
        <position position="124"/>
    </location>
</feature>
<feature type="sequence conflict" description="In Ref. 3; AAA33576." evidence="6" ref="3">
    <original>L</original>
    <variation>I</variation>
    <location>
        <position position="127"/>
    </location>
</feature>
<organism>
    <name type="scientific">Neurospora crassa (strain ATCC 24698 / 74-OR23-1A / CBS 708.71 / DSM 1257 / FGSC 987)</name>
    <dbReference type="NCBI Taxonomy" id="367110"/>
    <lineage>
        <taxon>Eukaryota</taxon>
        <taxon>Fungi</taxon>
        <taxon>Dikarya</taxon>
        <taxon>Ascomycota</taxon>
        <taxon>Pezizomycotina</taxon>
        <taxon>Sordariomycetes</taxon>
        <taxon>Sordariomycetidae</taxon>
        <taxon>Sordariales</taxon>
        <taxon>Sordariaceae</taxon>
        <taxon>Neurospora</taxon>
    </lineage>
</organism>
<comment type="function">
    <text evidence="1">Component of the cytochrome c oxidase, the last enzyme in the mitochondrial electron transport chain which drives oxidative phosphorylation. The respiratory chain contains 3 multisubunit complexes succinate dehydrogenase (complex II, CII), ubiquinol-cytochrome c oxidoreductase (cytochrome b-c1 complex, complex III, CIII) and cytochrome c oxidase (complex IV, CIV), that cooperate to transfer electrons derived from NADH and succinate to molecular oxygen, creating an electrochemical gradient over the inner membrane that drives transmembrane transport and the ATP synthase. Cytochrome c oxidase is the component of the respiratory chain that catalyzes the reduction of oxygen to water. Electrons originating from reduced cytochrome c in the intermembrane space (IMS) are transferred via the dinuclear copper A center (CU(A)) of Cox2 and heme A of Cox1 to the active site in Cox1, a binuclear center (BNC) formed by heme A3 and copper B (CU(B)). The BNC reduces molecular oxygen to 2 water molecules using 4 electrons from cytochrome c in the IMS and 4 protons from the mitochondrial matrix.</text>
</comment>
<comment type="pathway">
    <text evidence="1">Energy metabolism; oxidative phosphorylation.</text>
</comment>
<comment type="subunit">
    <text evidence="3 4">Component of the cytochrome c oxidase (complex IV, CIV), a multisubunit enzyme composed of 11 subunits. The complex is composed of a catalytic core of 3 subunits Cox1, Cox2 and Cox3, encoded in the mitochondrial DNA, and 8 supernumerary subunits Cox4, Cox5a/Cox5, Cox6, Cox7, Cox8, Cox7a/Cox9, Cox6b/Cox12 and Cox6a/Cox13, which are encoded in the nuclear genome (PubMed:31316820). The complex exists as a monomer or a dimer and forms respiratory supercomplexes (SCs) in the inner mitochondrial membrane with NADH-ubiquinone oxidoreductase (complex I, CI) and ubiquinol-cytochrome c oxidoreductase (cytochrome b-c1 complex, complex III, CIII), resulting in various different assemblies (supercomplexes I(1)IV(1), I(1)III(3)IV(2), III(2)IV(1) and III(2)IV(2) as well as larger supercomplexes of compositions like I(1)III(2)IV(5-6)) (PubMed:17873079).</text>
</comment>
<comment type="subcellular location">
    <subcellularLocation>
        <location evidence="4">Mitochondrion inner membrane</location>
        <topology evidence="4">Peripheral membrane protein</topology>
        <orientation evidence="4">Matrix side</orientation>
    </subcellularLocation>
</comment>
<comment type="similarity">
    <text evidence="6">Belongs to the cytochrome c oxidase subunit 5A family.</text>
</comment>
<reference key="1">
    <citation type="journal article" date="2003" name="Nucleic Acids Res.">
        <title>What's in the genome of a filamentous fungus? Analysis of the Neurospora genome sequence.</title>
        <authorList>
            <person name="Mannhaupt G."/>
            <person name="Montrone C."/>
            <person name="Haase D."/>
            <person name="Mewes H.-W."/>
            <person name="Aign V."/>
            <person name="Hoheisel J.D."/>
            <person name="Fartmann B."/>
            <person name="Nyakatura G."/>
            <person name="Kempken F."/>
            <person name="Maier J."/>
            <person name="Schulte U."/>
        </authorList>
    </citation>
    <scope>NUCLEOTIDE SEQUENCE [LARGE SCALE GENOMIC DNA]</scope>
    <source>
        <strain>ATCC 24698 / 74-OR23-1A / CBS 708.71 / DSM 1257 / FGSC 987</strain>
    </source>
</reference>
<reference key="2">
    <citation type="journal article" date="2003" name="Nature">
        <title>The genome sequence of the filamentous fungus Neurospora crassa.</title>
        <authorList>
            <person name="Galagan J.E."/>
            <person name="Calvo S.E."/>
            <person name="Borkovich K.A."/>
            <person name="Selker E.U."/>
            <person name="Read N.D."/>
            <person name="Jaffe D.B."/>
            <person name="FitzHugh W."/>
            <person name="Ma L.-J."/>
            <person name="Smirnov S."/>
            <person name="Purcell S."/>
            <person name="Rehman B."/>
            <person name="Elkins T."/>
            <person name="Engels R."/>
            <person name="Wang S."/>
            <person name="Nielsen C.B."/>
            <person name="Butler J."/>
            <person name="Endrizzi M."/>
            <person name="Qui D."/>
            <person name="Ianakiev P."/>
            <person name="Bell-Pedersen D."/>
            <person name="Nelson M.A."/>
            <person name="Werner-Washburne M."/>
            <person name="Selitrennikoff C.P."/>
            <person name="Kinsey J.A."/>
            <person name="Braun E.L."/>
            <person name="Zelter A."/>
            <person name="Schulte U."/>
            <person name="Kothe G.O."/>
            <person name="Jedd G."/>
            <person name="Mewes H.-W."/>
            <person name="Staben C."/>
            <person name="Marcotte E."/>
            <person name="Greenberg D."/>
            <person name="Roy A."/>
            <person name="Foley K."/>
            <person name="Naylor J."/>
            <person name="Stange-Thomann N."/>
            <person name="Barrett R."/>
            <person name="Gnerre S."/>
            <person name="Kamal M."/>
            <person name="Kamvysselis M."/>
            <person name="Mauceli E.W."/>
            <person name="Bielke C."/>
            <person name="Rudd S."/>
            <person name="Frishman D."/>
            <person name="Krystofova S."/>
            <person name="Rasmussen C."/>
            <person name="Metzenberg R.L."/>
            <person name="Perkins D.D."/>
            <person name="Kroken S."/>
            <person name="Cogoni C."/>
            <person name="Macino G."/>
            <person name="Catcheside D.E.A."/>
            <person name="Li W."/>
            <person name="Pratt R.J."/>
            <person name="Osmani S.A."/>
            <person name="DeSouza C.P.C."/>
            <person name="Glass N.L."/>
            <person name="Orbach M.J."/>
            <person name="Berglund J.A."/>
            <person name="Voelker R."/>
            <person name="Yarden O."/>
            <person name="Plamann M."/>
            <person name="Seiler S."/>
            <person name="Dunlap J.C."/>
            <person name="Radford A."/>
            <person name="Aramayo R."/>
            <person name="Natvig D.O."/>
            <person name="Alex L.A."/>
            <person name="Mannhaupt G."/>
            <person name="Ebbole D.J."/>
            <person name="Freitag M."/>
            <person name="Paulsen I."/>
            <person name="Sachs M.S."/>
            <person name="Lander E.S."/>
            <person name="Nusbaum C."/>
            <person name="Birren B.W."/>
        </authorList>
    </citation>
    <scope>NUCLEOTIDE SEQUENCE [LARGE SCALE GENOMIC DNA]</scope>
    <source>
        <strain>ATCC 24698 / 74-OR23-1A / CBS 708.71 / DSM 1257 / FGSC 987</strain>
    </source>
</reference>
<reference key="3">
    <citation type="journal article" date="1986" name="J. Biol. Chem.">
        <title>Nuclear genes for cytochrome c oxidase subunits of Neurospora crassa. Isolation and characterization of cDNA clones for subunits IV, V, VI, and possibly VII.</title>
        <authorList>
            <person name="Sachs M.S."/>
            <person name="David M."/>
            <person name="Werner S."/>
            <person name="RajBhandary U.L."/>
        </authorList>
    </citation>
    <scope>NUCLEOTIDE SEQUENCE [GENOMIC DNA] OF 124-148</scope>
</reference>
<reference key="4">
    <citation type="journal article" date="2007" name="Eukaryot. Cell">
        <title>Supramolecular organization of the respiratory chain in Neurospora crassa mitochondria.</title>
        <authorList>
            <person name="Marques I."/>
            <person name="Dencher N.A."/>
            <person name="Videira A."/>
            <person name="Krause F."/>
        </authorList>
    </citation>
    <scope>COMPOSITION OF THE CYTOCHROME C OXIDASE COMPLEX</scope>
    <scope>IDENTIFICATION BY MASS SPECTROMETRY</scope>
</reference>
<reference key="5">
    <citation type="journal article" date="2019" name="IUCrJ">
        <title>Cryo-EM structure of Neurospora crassa respiratory complex IV.</title>
        <authorList>
            <person name="Bausewein T."/>
            <person name="Nussberger S."/>
            <person name="Kuehlbrandt W."/>
        </authorList>
    </citation>
    <scope>STRUCTURE BY ELECTRON MICROSCOPY (5.5 ANGSTROMS)</scope>
    <scope>SUBUNIT</scope>
</reference>
<proteinExistence type="evidence at protein level"/>
<dbReference type="EMBL" id="BX294020">
    <property type="protein sequence ID" value="CAD70919.1"/>
    <property type="molecule type" value="Genomic_DNA"/>
</dbReference>
<dbReference type="EMBL" id="CM002240">
    <property type="protein sequence ID" value="ESA42595.1"/>
    <property type="molecule type" value="Genomic_DNA"/>
</dbReference>
<dbReference type="EMBL" id="CM002240">
    <property type="protein sequence ID" value="ESA42596.1"/>
    <property type="molecule type" value="Genomic_DNA"/>
</dbReference>
<dbReference type="EMBL" id="M12118">
    <property type="protein sequence ID" value="AAA33576.1"/>
    <property type="molecule type" value="Genomic_DNA"/>
</dbReference>
<dbReference type="PIR" id="C25629">
    <property type="entry name" value="C25629"/>
</dbReference>
<dbReference type="RefSeq" id="XP_011394699.1">
    <property type="nucleotide sequence ID" value="XM_011396397.1"/>
</dbReference>
<dbReference type="RefSeq" id="XP_011394700.1">
    <property type="nucleotide sequence ID" value="XM_011396398.1"/>
</dbReference>
<dbReference type="SMR" id="Q01359"/>
<dbReference type="FunCoup" id="Q01359">
    <property type="interactions" value="474"/>
</dbReference>
<dbReference type="STRING" id="367110.Q01359"/>
<dbReference type="PaxDb" id="5141-EFNCRP00000006692"/>
<dbReference type="EnsemblFungi" id="ESA42595">
    <property type="protein sequence ID" value="ESA42595"/>
    <property type="gene ID" value="NCU06695"/>
</dbReference>
<dbReference type="EnsemblFungi" id="ESA42596">
    <property type="protein sequence ID" value="ESA42596"/>
    <property type="gene ID" value="NCU06695"/>
</dbReference>
<dbReference type="GeneID" id="3877157"/>
<dbReference type="KEGG" id="ncr:NCU06695"/>
<dbReference type="VEuPathDB" id="FungiDB:NCU06695"/>
<dbReference type="HOGENOM" id="CLU_099086_0_0_1"/>
<dbReference type="InParanoid" id="Q01359"/>
<dbReference type="OMA" id="MEKWPAD"/>
<dbReference type="OrthoDB" id="5778907at2759"/>
<dbReference type="UniPathway" id="UPA00705"/>
<dbReference type="Proteomes" id="UP000001805">
    <property type="component" value="Chromosome 2, Linkage Group V"/>
</dbReference>
<dbReference type="GO" id="GO:0005743">
    <property type="term" value="C:mitochondrial inner membrane"/>
    <property type="evidence" value="ECO:0007669"/>
    <property type="project" value="UniProtKB-SubCell"/>
</dbReference>
<dbReference type="GO" id="GO:0045277">
    <property type="term" value="C:respiratory chain complex IV"/>
    <property type="evidence" value="ECO:0000318"/>
    <property type="project" value="GO_Central"/>
</dbReference>
<dbReference type="GO" id="GO:0004129">
    <property type="term" value="F:cytochrome-c oxidase activity"/>
    <property type="evidence" value="ECO:0007669"/>
    <property type="project" value="EnsemblFungi"/>
</dbReference>
<dbReference type="GO" id="GO:0046872">
    <property type="term" value="F:metal ion binding"/>
    <property type="evidence" value="ECO:0007669"/>
    <property type="project" value="UniProtKB-KW"/>
</dbReference>
<dbReference type="GO" id="GO:0006123">
    <property type="term" value="P:mitochondrial electron transport, cytochrome c to oxygen"/>
    <property type="evidence" value="ECO:0000318"/>
    <property type="project" value="GO_Central"/>
</dbReference>
<dbReference type="FunFam" id="1.25.40.40:FF:000001">
    <property type="entry name" value="Cytochrome c oxidase subunit VI"/>
    <property type="match status" value="1"/>
</dbReference>
<dbReference type="Gene3D" id="1.25.40.40">
    <property type="entry name" value="Cytochrome c oxidase, subunit Va/VI"/>
    <property type="match status" value="1"/>
</dbReference>
<dbReference type="InterPro" id="IPR003204">
    <property type="entry name" value="Cyt_c_oxidase_su5A/6"/>
</dbReference>
<dbReference type="InterPro" id="IPR036545">
    <property type="entry name" value="Cyt_c_oxidase_su5A/6_sf"/>
</dbReference>
<dbReference type="PANTHER" id="PTHR14200">
    <property type="entry name" value="CYTOCHROME C OXIDASE POLYPEPTIDE"/>
    <property type="match status" value="1"/>
</dbReference>
<dbReference type="PANTHER" id="PTHR14200:SF11">
    <property type="entry name" value="CYTOCHROME C OXIDASE SUBUNIT 5A, MITOCHONDRIAL"/>
    <property type="match status" value="1"/>
</dbReference>
<dbReference type="Pfam" id="PF02284">
    <property type="entry name" value="COX5A"/>
    <property type="match status" value="1"/>
</dbReference>
<dbReference type="SUPFAM" id="SSF48479">
    <property type="entry name" value="Cytochrome c oxidase subunit E"/>
    <property type="match status" value="1"/>
</dbReference>
<keyword id="KW-0349">Heme</keyword>
<keyword id="KW-0408">Iron</keyword>
<keyword id="KW-0472">Membrane</keyword>
<keyword id="KW-0479">Metal-binding</keyword>
<keyword id="KW-0496">Mitochondrion</keyword>
<keyword id="KW-0999">Mitochondrion inner membrane</keyword>
<keyword id="KW-1185">Reference proteome</keyword>
<keyword id="KW-0809">Transit peptide</keyword>
<accession>Q01359</accession>
<accession>Q871S4</accession>
<accession>V5IPD4</accession>
<gene>
    <name type="primary">cox-6</name>
    <name type="ORF">7F4.140</name>
    <name type="ORF">NCU06695</name>
</gene>